<organism>
    <name type="scientific">Psychromonas ingrahamii (strain DSM 17664 / CCUG 51855 / 37)</name>
    <dbReference type="NCBI Taxonomy" id="357804"/>
    <lineage>
        <taxon>Bacteria</taxon>
        <taxon>Pseudomonadati</taxon>
        <taxon>Pseudomonadota</taxon>
        <taxon>Gammaproteobacteria</taxon>
        <taxon>Alteromonadales</taxon>
        <taxon>Psychromonadaceae</taxon>
        <taxon>Psychromonas</taxon>
    </lineage>
</organism>
<evidence type="ECO:0000255" key="1">
    <source>
        <dbReference type="HAMAP-Rule" id="MF_00240"/>
    </source>
</evidence>
<reference key="1">
    <citation type="journal article" date="2008" name="BMC Genomics">
        <title>Genomics of an extreme psychrophile, Psychromonas ingrahamii.</title>
        <authorList>
            <person name="Riley M."/>
            <person name="Staley J.T."/>
            <person name="Danchin A."/>
            <person name="Wang T.Z."/>
            <person name="Brettin T.S."/>
            <person name="Hauser L.J."/>
            <person name="Land M.L."/>
            <person name="Thompson L.S."/>
        </authorList>
    </citation>
    <scope>NUCLEOTIDE SEQUENCE [LARGE SCALE GENOMIC DNA]</scope>
    <source>
        <strain>DSM 17664 / CCUG 51855 / 37</strain>
    </source>
</reference>
<feature type="signal peptide" evidence="1">
    <location>
        <begin position="1"/>
        <end position="22"/>
    </location>
</feature>
<feature type="chain" id="PRO_5000206691" description="Outer-membrane lipoprotein carrier protein">
    <location>
        <begin position="23"/>
        <end position="205"/>
    </location>
</feature>
<accession>A1SVE1</accession>
<proteinExistence type="inferred from homology"/>
<comment type="function">
    <text evidence="1">Participates in the translocation of lipoproteins from the inner membrane to the outer membrane. Only forms a complex with a lipoprotein if the residue after the N-terminal Cys is not an aspartate (The Asp acts as a targeting signal to indicate that the lipoprotein should stay in the inner membrane).</text>
</comment>
<comment type="subunit">
    <text evidence="1">Monomer.</text>
</comment>
<comment type="subcellular location">
    <subcellularLocation>
        <location evidence="1">Periplasm</location>
    </subcellularLocation>
</comment>
<comment type="similarity">
    <text evidence="1">Belongs to the LolA family.</text>
</comment>
<gene>
    <name evidence="1" type="primary">lolA</name>
    <name type="ordered locus">Ping_1663</name>
</gene>
<dbReference type="EMBL" id="CP000510">
    <property type="protein sequence ID" value="ABM03456.1"/>
    <property type="molecule type" value="Genomic_DNA"/>
</dbReference>
<dbReference type="RefSeq" id="WP_011770016.1">
    <property type="nucleotide sequence ID" value="NC_008709.1"/>
</dbReference>
<dbReference type="SMR" id="A1SVE1"/>
<dbReference type="STRING" id="357804.Ping_1663"/>
<dbReference type="KEGG" id="pin:Ping_1663"/>
<dbReference type="eggNOG" id="COG2834">
    <property type="taxonomic scope" value="Bacteria"/>
</dbReference>
<dbReference type="HOGENOM" id="CLU_087560_1_1_6"/>
<dbReference type="OrthoDB" id="9787361at2"/>
<dbReference type="Proteomes" id="UP000000639">
    <property type="component" value="Chromosome"/>
</dbReference>
<dbReference type="GO" id="GO:0030288">
    <property type="term" value="C:outer membrane-bounded periplasmic space"/>
    <property type="evidence" value="ECO:0007669"/>
    <property type="project" value="TreeGrafter"/>
</dbReference>
<dbReference type="GO" id="GO:0044874">
    <property type="term" value="P:lipoprotein localization to outer membrane"/>
    <property type="evidence" value="ECO:0007669"/>
    <property type="project" value="UniProtKB-UniRule"/>
</dbReference>
<dbReference type="GO" id="GO:0042953">
    <property type="term" value="P:lipoprotein transport"/>
    <property type="evidence" value="ECO:0007669"/>
    <property type="project" value="InterPro"/>
</dbReference>
<dbReference type="CDD" id="cd16325">
    <property type="entry name" value="LolA"/>
    <property type="match status" value="1"/>
</dbReference>
<dbReference type="Gene3D" id="2.50.20.10">
    <property type="entry name" value="Lipoprotein localisation LolA/LolB/LppX"/>
    <property type="match status" value="1"/>
</dbReference>
<dbReference type="HAMAP" id="MF_00240">
    <property type="entry name" value="LolA"/>
    <property type="match status" value="1"/>
</dbReference>
<dbReference type="InterPro" id="IPR029046">
    <property type="entry name" value="LolA/LolB/LppX"/>
</dbReference>
<dbReference type="InterPro" id="IPR004564">
    <property type="entry name" value="OM_lipoprot_carrier_LolA-like"/>
</dbReference>
<dbReference type="InterPro" id="IPR018323">
    <property type="entry name" value="OM_lipoprot_carrier_LolA_Pbac"/>
</dbReference>
<dbReference type="NCBIfam" id="TIGR00547">
    <property type="entry name" value="lolA"/>
    <property type="match status" value="1"/>
</dbReference>
<dbReference type="PANTHER" id="PTHR35869">
    <property type="entry name" value="OUTER-MEMBRANE LIPOPROTEIN CARRIER PROTEIN"/>
    <property type="match status" value="1"/>
</dbReference>
<dbReference type="PANTHER" id="PTHR35869:SF1">
    <property type="entry name" value="OUTER-MEMBRANE LIPOPROTEIN CARRIER PROTEIN"/>
    <property type="match status" value="1"/>
</dbReference>
<dbReference type="Pfam" id="PF03548">
    <property type="entry name" value="LolA"/>
    <property type="match status" value="1"/>
</dbReference>
<dbReference type="SUPFAM" id="SSF89392">
    <property type="entry name" value="Prokaryotic lipoproteins and lipoprotein localization factors"/>
    <property type="match status" value="1"/>
</dbReference>
<sequence length="205" mass="23011">MKKIVIVISILLTSFLSSAVSAATDSQLLKEKLAKFSFINAEFSQQVSSPEGKILDDSQGMLAISRPGKFRWEVLMPEEELIVSDGQTMWMYSPFIEQVTLLNLSDAIQGTPFILLSGANESQWADYQVNKVNDQFIVKNIAGTVQDRSFIFEFNKSSQVSKFVVIEALGQRSEFKLSHKVLSKPWVEGFFDFSIPAGVEIDDQR</sequence>
<name>LOLA_PSYIN</name>
<keyword id="KW-0143">Chaperone</keyword>
<keyword id="KW-0574">Periplasm</keyword>
<keyword id="KW-0653">Protein transport</keyword>
<keyword id="KW-1185">Reference proteome</keyword>
<keyword id="KW-0732">Signal</keyword>
<keyword id="KW-0813">Transport</keyword>
<protein>
    <recommendedName>
        <fullName evidence="1">Outer-membrane lipoprotein carrier protein</fullName>
    </recommendedName>
</protein>